<sequence>MMKRLVVLRRREPAVRFSCCGVRYGECRRNHAASTGGHAVDGCREFIAAEDGGGGNSTGAVGVAAAALKCAACGCHRSFHRRVQVYEVAWDDDCDSGDTSSSSPSSSSSLSSE</sequence>
<dbReference type="EMBL" id="CM000134">
    <property type="protein sequence ID" value="EAZ09093.1"/>
    <property type="molecule type" value="Genomic_DNA"/>
</dbReference>
<dbReference type="STRING" id="39946.A2Z182"/>
<dbReference type="EnsemblPlants" id="BGIOSGA030752-TA">
    <property type="protein sequence ID" value="BGIOSGA030752-PA"/>
    <property type="gene ID" value="BGIOSGA030752"/>
</dbReference>
<dbReference type="EnsemblPlants" id="OsGoSa_09g0010240.01">
    <property type="protein sequence ID" value="OsGoSa_09g0010240.01"/>
    <property type="gene ID" value="OsGoSa_09g0010240"/>
</dbReference>
<dbReference type="EnsemblPlants" id="OsIR64_09g0010330.01">
    <property type="protein sequence ID" value="OsIR64_09g0010330.01"/>
    <property type="gene ID" value="OsIR64_09g0010330"/>
</dbReference>
<dbReference type="EnsemblPlants" id="OsKYG_09g0010080.01">
    <property type="protein sequence ID" value="OsKYG_09g0010080.01"/>
    <property type="gene ID" value="OsKYG_09g0010080"/>
</dbReference>
<dbReference type="EnsemblPlants" id="OsLaMu_09g0010110.01">
    <property type="protein sequence ID" value="OsLaMu_09g0010110.01"/>
    <property type="gene ID" value="OsLaMu_09g0010110"/>
</dbReference>
<dbReference type="EnsemblPlants" id="OsLima_09g0010310.01">
    <property type="protein sequence ID" value="OsLima_09g0010310.01"/>
    <property type="gene ID" value="OsLima_09g0010310"/>
</dbReference>
<dbReference type="EnsemblPlants" id="OsLiXu_09g0010040.01">
    <property type="protein sequence ID" value="OsLiXu_09g0010040.01"/>
    <property type="gene ID" value="OsLiXu_09g0010040"/>
</dbReference>
<dbReference type="EnsemblPlants" id="OsMH63_09G010690_01">
    <property type="protein sequence ID" value="OsMH63_09G010690_01"/>
    <property type="gene ID" value="OsMH63_09G010690"/>
</dbReference>
<dbReference type="EnsemblPlants" id="OsPr106_09g0010350.01">
    <property type="protein sequence ID" value="OsPr106_09g0010350.01"/>
    <property type="gene ID" value="OsPr106_09g0010350"/>
</dbReference>
<dbReference type="EnsemblPlants" id="OsZS97_09G010240_01">
    <property type="protein sequence ID" value="OsZS97_09G010240_01"/>
    <property type="gene ID" value="OsZS97_09G010240"/>
</dbReference>
<dbReference type="Gramene" id="BGIOSGA030752-TA">
    <property type="protein sequence ID" value="BGIOSGA030752-PA"/>
    <property type="gene ID" value="BGIOSGA030752"/>
</dbReference>
<dbReference type="Gramene" id="OsGoSa_09g0010240.01">
    <property type="protein sequence ID" value="OsGoSa_09g0010240.01"/>
    <property type="gene ID" value="OsGoSa_09g0010240"/>
</dbReference>
<dbReference type="Gramene" id="OsIR64_09g0010330.01">
    <property type="protein sequence ID" value="OsIR64_09g0010330.01"/>
    <property type="gene ID" value="OsIR64_09g0010330"/>
</dbReference>
<dbReference type="Gramene" id="OsKYG_09g0010080.01">
    <property type="protein sequence ID" value="OsKYG_09g0010080.01"/>
    <property type="gene ID" value="OsKYG_09g0010080"/>
</dbReference>
<dbReference type="Gramene" id="OsLaMu_09g0010110.01">
    <property type="protein sequence ID" value="OsLaMu_09g0010110.01"/>
    <property type="gene ID" value="OsLaMu_09g0010110"/>
</dbReference>
<dbReference type="Gramene" id="OsLima_09g0010310.01">
    <property type="protein sequence ID" value="OsLima_09g0010310.01"/>
    <property type="gene ID" value="OsLima_09g0010310"/>
</dbReference>
<dbReference type="Gramene" id="OsLiXu_09g0010040.01">
    <property type="protein sequence ID" value="OsLiXu_09g0010040.01"/>
    <property type="gene ID" value="OsLiXu_09g0010040"/>
</dbReference>
<dbReference type="Gramene" id="OsMH63_09G010690_01">
    <property type="protein sequence ID" value="OsMH63_09G010690_01"/>
    <property type="gene ID" value="OsMH63_09G010690"/>
</dbReference>
<dbReference type="Gramene" id="OsPr106_09g0010350.01">
    <property type="protein sequence ID" value="OsPr106_09g0010350.01"/>
    <property type="gene ID" value="OsPr106_09g0010350"/>
</dbReference>
<dbReference type="Gramene" id="OsZS97_09G010240_01">
    <property type="protein sequence ID" value="OsZS97_09G010240_01"/>
    <property type="gene ID" value="OsZS97_09G010240"/>
</dbReference>
<dbReference type="HOGENOM" id="CLU_123565_1_1_1"/>
<dbReference type="OMA" id="YEFAWDY"/>
<dbReference type="OrthoDB" id="682018at2759"/>
<dbReference type="Proteomes" id="UP000007015">
    <property type="component" value="Chromosome 9"/>
</dbReference>
<dbReference type="GO" id="GO:0005737">
    <property type="term" value="C:cytoplasm"/>
    <property type="evidence" value="ECO:0007669"/>
    <property type="project" value="UniProtKB-SubCell"/>
</dbReference>
<dbReference type="GO" id="GO:0005634">
    <property type="term" value="C:nucleus"/>
    <property type="evidence" value="ECO:0007669"/>
    <property type="project" value="TreeGrafter"/>
</dbReference>
<dbReference type="GO" id="GO:0003700">
    <property type="term" value="F:DNA-binding transcription factor activity"/>
    <property type="evidence" value="ECO:0007669"/>
    <property type="project" value="TreeGrafter"/>
</dbReference>
<dbReference type="GO" id="GO:0000976">
    <property type="term" value="F:transcription cis-regulatory region binding"/>
    <property type="evidence" value="ECO:0007669"/>
    <property type="project" value="TreeGrafter"/>
</dbReference>
<dbReference type="GO" id="GO:0008270">
    <property type="term" value="F:zinc ion binding"/>
    <property type="evidence" value="ECO:0007669"/>
    <property type="project" value="UniProtKB-KW"/>
</dbReference>
<dbReference type="GO" id="GO:0050793">
    <property type="term" value="P:regulation of developmental process"/>
    <property type="evidence" value="ECO:0007669"/>
    <property type="project" value="TreeGrafter"/>
</dbReference>
<dbReference type="InterPro" id="IPR006456">
    <property type="entry name" value="ZF_HD_homeobox_Cys/His_dimer"/>
</dbReference>
<dbReference type="NCBIfam" id="TIGR01566">
    <property type="entry name" value="ZF_HD_prot_N"/>
    <property type="match status" value="1"/>
</dbReference>
<dbReference type="PANTHER" id="PTHR31948:SF169">
    <property type="entry name" value="MINI ZINC FINGER PROTEIN 2"/>
    <property type="match status" value="1"/>
</dbReference>
<dbReference type="PANTHER" id="PTHR31948">
    <property type="entry name" value="ZINC-FINGER HOMEODOMAIN PROTEIN 2"/>
    <property type="match status" value="1"/>
</dbReference>
<dbReference type="Pfam" id="PF04770">
    <property type="entry name" value="ZF-HD_dimer"/>
    <property type="match status" value="1"/>
</dbReference>
<dbReference type="PROSITE" id="PS51523">
    <property type="entry name" value="ZF_HD_DIMER"/>
    <property type="match status" value="1"/>
</dbReference>
<organism>
    <name type="scientific">Oryza sativa subsp. indica</name>
    <name type="common">Rice</name>
    <dbReference type="NCBI Taxonomy" id="39946"/>
    <lineage>
        <taxon>Eukaryota</taxon>
        <taxon>Viridiplantae</taxon>
        <taxon>Streptophyta</taxon>
        <taxon>Embryophyta</taxon>
        <taxon>Tracheophyta</taxon>
        <taxon>Spermatophyta</taxon>
        <taxon>Magnoliopsida</taxon>
        <taxon>Liliopsida</taxon>
        <taxon>Poales</taxon>
        <taxon>Poaceae</taxon>
        <taxon>BOP clade</taxon>
        <taxon>Oryzoideae</taxon>
        <taxon>Oryzeae</taxon>
        <taxon>Oryzinae</taxon>
        <taxon>Oryza</taxon>
        <taxon>Oryza sativa</taxon>
    </lineage>
</organism>
<proteinExistence type="inferred from homology"/>
<keyword id="KW-0963">Cytoplasm</keyword>
<keyword id="KW-0479">Metal-binding</keyword>
<keyword id="KW-1185">Reference proteome</keyword>
<keyword id="KW-0862">Zinc</keyword>
<keyword id="KW-0863">Zinc-finger</keyword>
<comment type="function">
    <text evidence="1">Inhibits zinc finger homeodomain (ZHD) transcription factors, by interacting with them to prevent both their nuclear localization and their DNA-binding properties.</text>
</comment>
<comment type="subunit">
    <text evidence="1">Homo- and heterodimers.</text>
</comment>
<comment type="subcellular location">
    <subcellularLocation>
        <location evidence="1">Cytoplasm</location>
    </subcellularLocation>
</comment>
<accession>A2Z182</accession>
<name>MIF3_ORYSI</name>
<protein>
    <recommendedName>
        <fullName>Mini zinc finger protein 3</fullName>
    </recommendedName>
</protein>
<feature type="chain" id="PRO_0000426033" description="Mini zinc finger protein 3">
    <location>
        <begin position="1"/>
        <end position="113"/>
    </location>
</feature>
<feature type="zinc finger region" description="ZF-HD dimerization-type; degenerate" evidence="2">
    <location>
        <begin position="24"/>
        <end position="83"/>
    </location>
</feature>
<feature type="region of interest" description="Disordered" evidence="3">
    <location>
        <begin position="93"/>
        <end position="113"/>
    </location>
</feature>
<feature type="compositionally biased region" description="Low complexity" evidence="3">
    <location>
        <begin position="97"/>
        <end position="113"/>
    </location>
</feature>
<evidence type="ECO:0000250" key="1"/>
<evidence type="ECO:0000255" key="2">
    <source>
        <dbReference type="PROSITE-ProRule" id="PRU00856"/>
    </source>
</evidence>
<evidence type="ECO:0000256" key="3">
    <source>
        <dbReference type="SAM" id="MobiDB-lite"/>
    </source>
</evidence>
<reference key="1">
    <citation type="journal article" date="2005" name="PLoS Biol.">
        <title>The genomes of Oryza sativa: a history of duplications.</title>
        <authorList>
            <person name="Yu J."/>
            <person name="Wang J."/>
            <person name="Lin W."/>
            <person name="Li S."/>
            <person name="Li H."/>
            <person name="Zhou J."/>
            <person name="Ni P."/>
            <person name="Dong W."/>
            <person name="Hu S."/>
            <person name="Zeng C."/>
            <person name="Zhang J."/>
            <person name="Zhang Y."/>
            <person name="Li R."/>
            <person name="Xu Z."/>
            <person name="Li S."/>
            <person name="Li X."/>
            <person name="Zheng H."/>
            <person name="Cong L."/>
            <person name="Lin L."/>
            <person name="Yin J."/>
            <person name="Geng J."/>
            <person name="Li G."/>
            <person name="Shi J."/>
            <person name="Liu J."/>
            <person name="Lv H."/>
            <person name="Li J."/>
            <person name="Wang J."/>
            <person name="Deng Y."/>
            <person name="Ran L."/>
            <person name="Shi X."/>
            <person name="Wang X."/>
            <person name="Wu Q."/>
            <person name="Li C."/>
            <person name="Ren X."/>
            <person name="Wang J."/>
            <person name="Wang X."/>
            <person name="Li D."/>
            <person name="Liu D."/>
            <person name="Zhang X."/>
            <person name="Ji Z."/>
            <person name="Zhao W."/>
            <person name="Sun Y."/>
            <person name="Zhang Z."/>
            <person name="Bao J."/>
            <person name="Han Y."/>
            <person name="Dong L."/>
            <person name="Ji J."/>
            <person name="Chen P."/>
            <person name="Wu S."/>
            <person name="Liu J."/>
            <person name="Xiao Y."/>
            <person name="Bu D."/>
            <person name="Tan J."/>
            <person name="Yang L."/>
            <person name="Ye C."/>
            <person name="Zhang J."/>
            <person name="Xu J."/>
            <person name="Zhou Y."/>
            <person name="Yu Y."/>
            <person name="Zhang B."/>
            <person name="Zhuang S."/>
            <person name="Wei H."/>
            <person name="Liu B."/>
            <person name="Lei M."/>
            <person name="Yu H."/>
            <person name="Li Y."/>
            <person name="Xu H."/>
            <person name="Wei S."/>
            <person name="He X."/>
            <person name="Fang L."/>
            <person name="Zhang Z."/>
            <person name="Zhang Y."/>
            <person name="Huang X."/>
            <person name="Su Z."/>
            <person name="Tong W."/>
            <person name="Li J."/>
            <person name="Tong Z."/>
            <person name="Li S."/>
            <person name="Ye J."/>
            <person name="Wang L."/>
            <person name="Fang L."/>
            <person name="Lei T."/>
            <person name="Chen C.-S."/>
            <person name="Chen H.-C."/>
            <person name="Xu Z."/>
            <person name="Li H."/>
            <person name="Huang H."/>
            <person name="Zhang F."/>
            <person name="Xu H."/>
            <person name="Li N."/>
            <person name="Zhao C."/>
            <person name="Li S."/>
            <person name="Dong L."/>
            <person name="Huang Y."/>
            <person name="Li L."/>
            <person name="Xi Y."/>
            <person name="Qi Q."/>
            <person name="Li W."/>
            <person name="Zhang B."/>
            <person name="Hu W."/>
            <person name="Zhang Y."/>
            <person name="Tian X."/>
            <person name="Jiao Y."/>
            <person name="Liang X."/>
            <person name="Jin J."/>
            <person name="Gao L."/>
            <person name="Zheng W."/>
            <person name="Hao B."/>
            <person name="Liu S.-M."/>
            <person name="Wang W."/>
            <person name="Yuan L."/>
            <person name="Cao M."/>
            <person name="McDermott J."/>
            <person name="Samudrala R."/>
            <person name="Wang J."/>
            <person name="Wong G.K.-S."/>
            <person name="Yang H."/>
        </authorList>
    </citation>
    <scope>NUCLEOTIDE SEQUENCE [LARGE SCALE GENOMIC DNA]</scope>
    <source>
        <strain>cv. 93-11</strain>
    </source>
</reference>
<gene>
    <name type="primary">MIF3</name>
    <name type="ORF">OsI_31359</name>
</gene>